<organism>
    <name type="scientific">Xanthomonas campestris pv. campestris (strain B100)</name>
    <dbReference type="NCBI Taxonomy" id="509169"/>
    <lineage>
        <taxon>Bacteria</taxon>
        <taxon>Pseudomonadati</taxon>
        <taxon>Pseudomonadota</taxon>
        <taxon>Gammaproteobacteria</taxon>
        <taxon>Lysobacterales</taxon>
        <taxon>Lysobacteraceae</taxon>
        <taxon>Xanthomonas</taxon>
    </lineage>
</organism>
<evidence type="ECO:0000250" key="1">
    <source>
        <dbReference type="UniProtKB" id="P61887"/>
    </source>
</evidence>
<evidence type="ECO:0000305" key="2"/>
<reference key="1">
    <citation type="journal article" date="1993" name="J. Bacteriol.">
        <title>A 3.9-kb DNA region of Xanthomonas campestris pv. campestris that is necessary for lipopolysaccharide production encodes a set of enzymes involved in the synthesis of dTDP-rhamnose.</title>
        <authorList>
            <person name="Koeplin R."/>
            <person name="Wang G."/>
            <person name="Hoette B."/>
            <person name="Priefer U.B."/>
            <person name="Puehler A."/>
        </authorList>
    </citation>
    <scope>NUCLEOTIDE SEQUENCE [GENOMIC DNA]</scope>
</reference>
<reference key="2">
    <citation type="journal article" date="2008" name="J. Biotechnol.">
        <title>The genome of Xanthomonas campestris pv. campestris B100 and its use for the reconstruction of metabolic pathways involved in xanthan biosynthesis.</title>
        <authorList>
            <person name="Vorhoelter F.-J."/>
            <person name="Schneiker S."/>
            <person name="Goesmann A."/>
            <person name="Krause L."/>
            <person name="Bekel T."/>
            <person name="Kaiser O."/>
            <person name="Linke B."/>
            <person name="Patschkowski T."/>
            <person name="Rueckert C."/>
            <person name="Schmid J."/>
            <person name="Sidhu V.K."/>
            <person name="Sieber V."/>
            <person name="Tauch A."/>
            <person name="Watt S.A."/>
            <person name="Weisshaar B."/>
            <person name="Becker A."/>
            <person name="Niehaus K."/>
            <person name="Puehler A."/>
        </authorList>
    </citation>
    <scope>NUCLEOTIDE SEQUENCE [LARGE SCALE GENOMIC DNA]</scope>
    <source>
        <strain>B100</strain>
    </source>
</reference>
<feature type="chain" id="PRO_0000333188" description="Glucose-1-phosphate thymidylyltransferase">
    <location>
        <begin position="1"/>
        <end position="295"/>
    </location>
</feature>
<feature type="binding site" evidence="1">
    <location>
        <position position="111"/>
    </location>
    <ligand>
        <name>Mg(2+)</name>
        <dbReference type="ChEBI" id="CHEBI:18420"/>
    </ligand>
</feature>
<feature type="binding site" evidence="1">
    <location>
        <position position="226"/>
    </location>
    <ligand>
        <name>Mg(2+)</name>
        <dbReference type="ChEBI" id="CHEBI:18420"/>
    </ligand>
</feature>
<sequence length="295" mass="32508">MTQRKGIILAGGSGTRLYPITKGVSKQLLPVYDKPMIYYPLSVLMLAGIRDILIINTPHEQALFQSLLGDGAQWGVNIQYAVQPSPDGLAQAYLIGRDFVGGKPSCLVLGDNIFHGHGLTDTLRRADAREQGATVFGYWVNDPERYGVAEFDQHGKVIDIAEKPEKPRSNYAVTGLYFYDGKASDYAAALKPSPRGELEITDLNRCYLDAGDLHLEPLGRGYAWLDTGTHQSLHEAANFIETIQMRQGLQVCCPEEIAFGQGWIDAEQLERLAAPLLKNDYGKYLTALAKRGAVH</sequence>
<comment type="function">
    <text evidence="1">Catalyzes the formation of dTDP-glucose, from dTTP and glucose 1-phosphate, as well as its pyrophosphorolysis.</text>
</comment>
<comment type="catalytic activity">
    <reaction evidence="1">
        <text>dTTP + alpha-D-glucose 1-phosphate + H(+) = dTDP-alpha-D-glucose + diphosphate</text>
        <dbReference type="Rhea" id="RHEA:15225"/>
        <dbReference type="ChEBI" id="CHEBI:15378"/>
        <dbReference type="ChEBI" id="CHEBI:33019"/>
        <dbReference type="ChEBI" id="CHEBI:37568"/>
        <dbReference type="ChEBI" id="CHEBI:57477"/>
        <dbReference type="ChEBI" id="CHEBI:58601"/>
        <dbReference type="EC" id="2.7.7.24"/>
    </reaction>
</comment>
<comment type="cofactor">
    <cofactor evidence="1">
        <name>Mg(2+)</name>
        <dbReference type="ChEBI" id="CHEBI:18420"/>
    </cofactor>
    <text evidence="1">Binds 1 Mg(2+) ion per subunit.</text>
</comment>
<comment type="pathway">
    <text>Carbohydrate biosynthesis; dTDP-L-rhamnose biosynthesis.</text>
</comment>
<comment type="pathway">
    <text>Bacterial outer membrane biogenesis; LPS O-antigen biosynthesis.</text>
</comment>
<comment type="subunit">
    <text evidence="1">Homotetramer.</text>
</comment>
<comment type="similarity">
    <text evidence="2">Belongs to the glucose-1-phosphate thymidylyltransferase family.</text>
</comment>
<name>RMLA_XANCB</name>
<protein>
    <recommendedName>
        <fullName>Glucose-1-phosphate thymidylyltransferase</fullName>
        <ecNumber evidence="1">2.7.7.24</ecNumber>
    </recommendedName>
    <alternativeName>
        <fullName>dTDP-glucose pyrophosphorylase</fullName>
    </alternativeName>
    <alternativeName>
        <fullName>dTDP-glucose synthase</fullName>
    </alternativeName>
</protein>
<accession>B0RVK9</accession>
<accession>P55256</accession>
<keyword id="KW-0448">Lipopolysaccharide biosynthesis</keyword>
<keyword id="KW-0460">Magnesium</keyword>
<keyword id="KW-0479">Metal-binding</keyword>
<keyword id="KW-0548">Nucleotidyltransferase</keyword>
<keyword id="KW-0808">Transferase</keyword>
<gene>
    <name type="primary">rmlA</name>
    <name type="ordered locus">xcc-b100_3733</name>
</gene>
<proteinExistence type="inferred from homology"/>
<dbReference type="EC" id="2.7.7.24" evidence="1"/>
<dbReference type="EMBL" id="AF204145">
    <property type="protein sequence ID" value="AAA16191.1"/>
    <property type="molecule type" value="Genomic_DNA"/>
</dbReference>
<dbReference type="EMBL" id="AM920689">
    <property type="protein sequence ID" value="CAP53100.1"/>
    <property type="molecule type" value="Genomic_DNA"/>
</dbReference>
<dbReference type="PIR" id="A49906">
    <property type="entry name" value="A49906"/>
</dbReference>
<dbReference type="SMR" id="B0RVK9"/>
<dbReference type="KEGG" id="xca:xcc-b100_3733"/>
<dbReference type="HOGENOM" id="CLU_029499_9_0_6"/>
<dbReference type="UniPathway" id="UPA00124"/>
<dbReference type="UniPathway" id="UPA00281"/>
<dbReference type="Proteomes" id="UP000001188">
    <property type="component" value="Chromosome"/>
</dbReference>
<dbReference type="GO" id="GO:0008879">
    <property type="term" value="F:glucose-1-phosphate thymidylyltransferase activity"/>
    <property type="evidence" value="ECO:0007669"/>
    <property type="project" value="UniProtKB-EC"/>
</dbReference>
<dbReference type="GO" id="GO:0046872">
    <property type="term" value="F:metal ion binding"/>
    <property type="evidence" value="ECO:0007669"/>
    <property type="project" value="UniProtKB-KW"/>
</dbReference>
<dbReference type="GO" id="GO:0019305">
    <property type="term" value="P:dTDP-rhamnose biosynthetic process"/>
    <property type="evidence" value="ECO:0007669"/>
    <property type="project" value="UniProtKB-UniPathway"/>
</dbReference>
<dbReference type="GO" id="GO:0009243">
    <property type="term" value="P:O antigen biosynthetic process"/>
    <property type="evidence" value="ECO:0007669"/>
    <property type="project" value="UniProtKB-UniPathway"/>
</dbReference>
<dbReference type="CDD" id="cd02538">
    <property type="entry name" value="G1P_TT_short"/>
    <property type="match status" value="1"/>
</dbReference>
<dbReference type="FunFam" id="3.90.550.10:FF:000023">
    <property type="entry name" value="Glucose-1-phosphate thymidylyltransferase"/>
    <property type="match status" value="1"/>
</dbReference>
<dbReference type="Gene3D" id="3.90.550.10">
    <property type="entry name" value="Spore Coat Polysaccharide Biosynthesis Protein SpsA, Chain A"/>
    <property type="match status" value="1"/>
</dbReference>
<dbReference type="InterPro" id="IPR005907">
    <property type="entry name" value="G1P_thy_trans_s"/>
</dbReference>
<dbReference type="InterPro" id="IPR005835">
    <property type="entry name" value="NTP_transferase_dom"/>
</dbReference>
<dbReference type="InterPro" id="IPR029044">
    <property type="entry name" value="Nucleotide-diphossugar_trans"/>
</dbReference>
<dbReference type="NCBIfam" id="TIGR01207">
    <property type="entry name" value="rmlA"/>
    <property type="match status" value="1"/>
</dbReference>
<dbReference type="PANTHER" id="PTHR43532">
    <property type="entry name" value="GLUCOSE-1-PHOSPHATE THYMIDYLYLTRANSFERASE"/>
    <property type="match status" value="1"/>
</dbReference>
<dbReference type="PANTHER" id="PTHR43532:SF1">
    <property type="entry name" value="GLUCOSE-1-PHOSPHATE THYMIDYLYLTRANSFERASE 1"/>
    <property type="match status" value="1"/>
</dbReference>
<dbReference type="Pfam" id="PF00483">
    <property type="entry name" value="NTP_transferase"/>
    <property type="match status" value="1"/>
</dbReference>
<dbReference type="SUPFAM" id="SSF53448">
    <property type="entry name" value="Nucleotide-diphospho-sugar transferases"/>
    <property type="match status" value="1"/>
</dbReference>